<dbReference type="EC" id="5.1.1.3" evidence="1"/>
<dbReference type="EMBL" id="CP000947">
    <property type="protein sequence ID" value="ACA32201.1"/>
    <property type="molecule type" value="Genomic_DNA"/>
</dbReference>
<dbReference type="RefSeq" id="WP_012341383.1">
    <property type="nucleotide sequence ID" value="NC_010519.1"/>
</dbReference>
<dbReference type="SMR" id="B0URZ3"/>
<dbReference type="STRING" id="228400.HSM_0550"/>
<dbReference type="GeneID" id="31486823"/>
<dbReference type="KEGG" id="hsm:HSM_0550"/>
<dbReference type="HOGENOM" id="CLU_052344_2_0_6"/>
<dbReference type="UniPathway" id="UPA00219"/>
<dbReference type="GO" id="GO:0008881">
    <property type="term" value="F:glutamate racemase activity"/>
    <property type="evidence" value="ECO:0007669"/>
    <property type="project" value="UniProtKB-UniRule"/>
</dbReference>
<dbReference type="GO" id="GO:0071555">
    <property type="term" value="P:cell wall organization"/>
    <property type="evidence" value="ECO:0007669"/>
    <property type="project" value="UniProtKB-KW"/>
</dbReference>
<dbReference type="GO" id="GO:0009252">
    <property type="term" value="P:peptidoglycan biosynthetic process"/>
    <property type="evidence" value="ECO:0007669"/>
    <property type="project" value="UniProtKB-UniRule"/>
</dbReference>
<dbReference type="GO" id="GO:0008360">
    <property type="term" value="P:regulation of cell shape"/>
    <property type="evidence" value="ECO:0007669"/>
    <property type="project" value="UniProtKB-KW"/>
</dbReference>
<dbReference type="FunFam" id="3.40.50.1860:FF:000001">
    <property type="entry name" value="Glutamate racemase"/>
    <property type="match status" value="1"/>
</dbReference>
<dbReference type="Gene3D" id="3.40.50.1860">
    <property type="match status" value="2"/>
</dbReference>
<dbReference type="HAMAP" id="MF_00258">
    <property type="entry name" value="Glu_racemase"/>
    <property type="match status" value="1"/>
</dbReference>
<dbReference type="InterPro" id="IPR015942">
    <property type="entry name" value="Asp/Glu/hydantoin_racemase"/>
</dbReference>
<dbReference type="InterPro" id="IPR001920">
    <property type="entry name" value="Asp/Glu_race"/>
</dbReference>
<dbReference type="InterPro" id="IPR018187">
    <property type="entry name" value="Asp/Glu_racemase_AS_1"/>
</dbReference>
<dbReference type="InterPro" id="IPR033134">
    <property type="entry name" value="Asp/Glu_racemase_AS_2"/>
</dbReference>
<dbReference type="InterPro" id="IPR004391">
    <property type="entry name" value="Glu_race"/>
</dbReference>
<dbReference type="NCBIfam" id="TIGR00067">
    <property type="entry name" value="glut_race"/>
    <property type="match status" value="1"/>
</dbReference>
<dbReference type="PANTHER" id="PTHR21198">
    <property type="entry name" value="GLUTAMATE RACEMASE"/>
    <property type="match status" value="1"/>
</dbReference>
<dbReference type="PANTHER" id="PTHR21198:SF2">
    <property type="entry name" value="GLUTAMATE RACEMASE"/>
    <property type="match status" value="1"/>
</dbReference>
<dbReference type="Pfam" id="PF01177">
    <property type="entry name" value="Asp_Glu_race"/>
    <property type="match status" value="1"/>
</dbReference>
<dbReference type="SUPFAM" id="SSF53681">
    <property type="entry name" value="Aspartate/glutamate racemase"/>
    <property type="match status" value="2"/>
</dbReference>
<dbReference type="PROSITE" id="PS00923">
    <property type="entry name" value="ASP_GLU_RACEMASE_1"/>
    <property type="match status" value="1"/>
</dbReference>
<dbReference type="PROSITE" id="PS00924">
    <property type="entry name" value="ASP_GLU_RACEMASE_2"/>
    <property type="match status" value="1"/>
</dbReference>
<name>MURI_HISS2</name>
<keyword id="KW-0133">Cell shape</keyword>
<keyword id="KW-0961">Cell wall biogenesis/degradation</keyword>
<keyword id="KW-0413">Isomerase</keyword>
<keyword id="KW-0573">Peptidoglycan synthesis</keyword>
<accession>B0URZ3</accession>
<feature type="chain" id="PRO_1000078560" description="Glutamate racemase">
    <location>
        <begin position="1"/>
        <end position="267"/>
    </location>
</feature>
<feature type="active site" description="Proton donor/acceptor" evidence="1">
    <location>
        <position position="77"/>
    </location>
</feature>
<feature type="active site" description="Proton donor/acceptor" evidence="1">
    <location>
        <position position="188"/>
    </location>
</feature>
<feature type="binding site" evidence="1">
    <location>
        <begin position="13"/>
        <end position="14"/>
    </location>
    <ligand>
        <name>substrate</name>
    </ligand>
</feature>
<feature type="binding site" evidence="1">
    <location>
        <begin position="45"/>
        <end position="46"/>
    </location>
    <ligand>
        <name>substrate</name>
    </ligand>
</feature>
<feature type="binding site" evidence="1">
    <location>
        <begin position="78"/>
        <end position="79"/>
    </location>
    <ligand>
        <name>substrate</name>
    </ligand>
</feature>
<feature type="binding site" evidence="1">
    <location>
        <begin position="189"/>
        <end position="190"/>
    </location>
    <ligand>
        <name>substrate</name>
    </ligand>
</feature>
<reference key="1">
    <citation type="submission" date="2008-02" db="EMBL/GenBank/DDBJ databases">
        <title>Complete sequence of Haemophilus somnus 2336.</title>
        <authorList>
            <consortium name="US DOE Joint Genome Institute"/>
            <person name="Siddaramappa S."/>
            <person name="Duncan A.J."/>
            <person name="Challacombe J.F."/>
            <person name="Rainey D."/>
            <person name="Gillaspy A.F."/>
            <person name="Carson M."/>
            <person name="Gipson J."/>
            <person name="Gipson M."/>
            <person name="Bruce D."/>
            <person name="Detter J.C."/>
            <person name="Han C.S."/>
            <person name="Land M."/>
            <person name="Tapia R."/>
            <person name="Thompson L.S."/>
            <person name="Orvis J."/>
            <person name="Zaitshik J."/>
            <person name="Barnes G."/>
            <person name="Brettin T.S."/>
            <person name="Dyer D.W."/>
            <person name="Inzana T.J."/>
        </authorList>
    </citation>
    <scope>NUCLEOTIDE SEQUENCE [LARGE SCALE GENOMIC DNA]</scope>
    <source>
        <strain>2336</strain>
    </source>
</reference>
<gene>
    <name evidence="1" type="primary">murI</name>
    <name type="ordered locus">HSM_0550</name>
</gene>
<protein>
    <recommendedName>
        <fullName evidence="1">Glutamate racemase</fullName>
        <ecNumber evidence="1">5.1.1.3</ecNumber>
    </recommendedName>
</protein>
<organism>
    <name type="scientific">Histophilus somni (strain 2336)</name>
    <name type="common">Haemophilus somnus</name>
    <dbReference type="NCBI Taxonomy" id="228400"/>
    <lineage>
        <taxon>Bacteria</taxon>
        <taxon>Pseudomonadati</taxon>
        <taxon>Pseudomonadota</taxon>
        <taxon>Gammaproteobacteria</taxon>
        <taxon>Pasteurellales</taxon>
        <taxon>Pasteurellaceae</taxon>
        <taxon>Histophilus</taxon>
    </lineage>
</organism>
<sequence>MRFSIQPTILFFDSGVGGLSVYKETKQLLPDCHYLYGFDNGFFPYSEKDEKDIIDRTLRICQKINQTYPLDLIVIACNTASTVVLPELRRNFSIPIVGTVPAIKPAAEMSETKHIGLIATKGTIKRTYVNDLIKNYAYHCMVEKIGSTKLVEIAEQKLRGGEVDLNVLKQELSPWKTMKSLDSVVLGCTHFPLIKEEIECCLPQVKFFVSSGKAIAKRVKFLLKGIEVRSKIQKKNLIFCTKPLEDDKSVQQILDFGEFENLVILSD</sequence>
<comment type="function">
    <text evidence="1">Provides the (R)-glutamate required for cell wall biosynthesis.</text>
</comment>
<comment type="catalytic activity">
    <reaction evidence="1">
        <text>L-glutamate = D-glutamate</text>
        <dbReference type="Rhea" id="RHEA:12813"/>
        <dbReference type="ChEBI" id="CHEBI:29985"/>
        <dbReference type="ChEBI" id="CHEBI:29986"/>
        <dbReference type="EC" id="5.1.1.3"/>
    </reaction>
</comment>
<comment type="pathway">
    <text evidence="1">Cell wall biogenesis; peptidoglycan biosynthesis.</text>
</comment>
<comment type="similarity">
    <text evidence="1">Belongs to the aspartate/glutamate racemases family.</text>
</comment>
<evidence type="ECO:0000255" key="1">
    <source>
        <dbReference type="HAMAP-Rule" id="MF_00258"/>
    </source>
</evidence>
<proteinExistence type="inferred from homology"/>